<reference key="1">
    <citation type="submission" date="2002-04" db="EMBL/GenBank/DDBJ databases">
        <title>Isolation and characterization of cDNA for macaque neurological disease genes.</title>
        <authorList>
            <person name="Kusuda J."/>
            <person name="Osada N."/>
            <person name="Hida M."/>
            <person name="Sugano S."/>
            <person name="Hashimoto K."/>
        </authorList>
    </citation>
    <scope>NUCLEOTIDE SEQUENCE [LARGE SCALE MRNA]</scope>
    <source>
        <tissue>Frontal cortex</tissue>
    </source>
</reference>
<name>S2513_MACFA</name>
<proteinExistence type="evidence at transcript level"/>
<gene>
    <name evidence="4" type="primary">SLC25A13</name>
    <name type="ORF">QflA-10133</name>
</gene>
<evidence type="ECO:0000250" key="1">
    <source>
        <dbReference type="UniProtKB" id="F1LZW6"/>
    </source>
</evidence>
<evidence type="ECO:0000250" key="2">
    <source>
        <dbReference type="UniProtKB" id="O75746"/>
    </source>
</evidence>
<evidence type="ECO:0000250" key="3">
    <source>
        <dbReference type="UniProtKB" id="Q9QXX4"/>
    </source>
</evidence>
<evidence type="ECO:0000250" key="4">
    <source>
        <dbReference type="UniProtKB" id="Q9UJS0"/>
    </source>
</evidence>
<evidence type="ECO:0000255" key="5">
    <source>
        <dbReference type="PROSITE-ProRule" id="PRU00282"/>
    </source>
</evidence>
<evidence type="ECO:0000255" key="6">
    <source>
        <dbReference type="PROSITE-ProRule" id="PRU00448"/>
    </source>
</evidence>
<evidence type="ECO:0000305" key="7"/>
<evidence type="ECO:0000312" key="8">
    <source>
        <dbReference type="Proteomes" id="UP000233100"/>
    </source>
</evidence>
<feature type="initiator methionine" description="Removed" evidence="4">
    <location>
        <position position="1"/>
    </location>
</feature>
<feature type="chain" id="PRO_0000090601" description="Electrogenic aspartate/glutamate antiporter SLC25A13, mitochondrial">
    <location>
        <begin position="2"/>
        <end position="674"/>
    </location>
</feature>
<feature type="topological domain" description="Mitochondrial intermembrane" evidence="7">
    <location>
        <begin position="2"/>
        <end position="331"/>
    </location>
</feature>
<feature type="transmembrane region" description="Helical; Name=1" evidence="2">
    <location>
        <begin position="332"/>
        <end position="349"/>
    </location>
</feature>
<feature type="topological domain" description="Mitochondrial matrix" evidence="7">
    <location>
        <begin position="350"/>
        <end position="392"/>
    </location>
</feature>
<feature type="transmembrane region" description="Helical; Name=2" evidence="2">
    <location>
        <begin position="393"/>
        <end position="412"/>
    </location>
</feature>
<feature type="topological domain" description="Mitochondrial intermembrane" evidence="7">
    <location>
        <begin position="413"/>
        <end position="435"/>
    </location>
</feature>
<feature type="transmembrane region" description="Helical; Name=3" evidence="2">
    <location>
        <begin position="436"/>
        <end position="449"/>
    </location>
</feature>
<feature type="topological domain" description="Mitochondrial matrix" evidence="7">
    <location>
        <begin position="450"/>
        <end position="484"/>
    </location>
</feature>
<feature type="transmembrane region" description="Helical; Name=4" evidence="2">
    <location>
        <begin position="485"/>
        <end position="504"/>
    </location>
</feature>
<feature type="topological domain" description="Mitochondrial intermembrane" evidence="7">
    <location>
        <begin position="505"/>
        <end position="523"/>
    </location>
</feature>
<feature type="transmembrane region" description="Helical; Name=5" evidence="2">
    <location>
        <begin position="524"/>
        <end position="541"/>
    </location>
</feature>
<feature type="topological domain" description="Mitochondrial matrix" evidence="7">
    <location>
        <begin position="542"/>
        <end position="580"/>
    </location>
</feature>
<feature type="transmembrane region" description="Helical; Name=6" evidence="2">
    <location>
        <begin position="581"/>
        <end position="599"/>
    </location>
</feature>
<feature type="topological domain" description="Mitochondrial intermembrane" evidence="7">
    <location>
        <begin position="600"/>
        <end position="674"/>
    </location>
</feature>
<feature type="domain" description="EF-hand 1" evidence="7">
    <location>
        <begin position="51"/>
        <end position="86"/>
    </location>
</feature>
<feature type="domain" description="EF-hand 2" evidence="6">
    <location>
        <begin position="87"/>
        <end position="122"/>
    </location>
</feature>
<feature type="domain" description="EF-hand 3" evidence="7">
    <location>
        <begin position="123"/>
        <end position="157"/>
    </location>
</feature>
<feature type="domain" description="EF-hand 4" evidence="6">
    <location>
        <begin position="158"/>
        <end position="193"/>
    </location>
</feature>
<feature type="repeat" description="Solcar 1" evidence="5">
    <location>
        <begin position="326"/>
        <end position="418"/>
    </location>
</feature>
<feature type="repeat" description="Solcar 2" evidence="5">
    <location>
        <begin position="426"/>
        <end position="510"/>
    </location>
</feature>
<feature type="repeat" description="Solcar 3" evidence="5">
    <location>
        <begin position="518"/>
        <end position="605"/>
    </location>
</feature>
<feature type="region of interest" description="Regulatory N-terminal domain" evidence="4">
    <location>
        <begin position="2"/>
        <end position="295"/>
    </location>
</feature>
<feature type="region of interest" description="Linker loop domain" evidence="2">
    <location>
        <begin position="296"/>
        <end position="311"/>
    </location>
</feature>
<feature type="region of interest" description="Carrier domain" evidence="4">
    <location>
        <begin position="321"/>
        <end position="611"/>
    </location>
</feature>
<feature type="region of interest" description="C-terminal domain" evidence="4">
    <location>
        <begin position="612"/>
        <end position="674"/>
    </location>
</feature>
<feature type="binding site" evidence="4">
    <location>
        <position position="66"/>
    </location>
    <ligand>
        <name>Ca(2+)</name>
        <dbReference type="ChEBI" id="CHEBI:29108"/>
    </ligand>
</feature>
<feature type="binding site" evidence="4">
    <location>
        <position position="68"/>
    </location>
    <ligand>
        <name>Ca(2+)</name>
        <dbReference type="ChEBI" id="CHEBI:29108"/>
    </ligand>
</feature>
<feature type="binding site" evidence="4">
    <location>
        <position position="70"/>
    </location>
    <ligand>
        <name>Ca(2+)</name>
        <dbReference type="ChEBI" id="CHEBI:29108"/>
    </ligand>
</feature>
<feature type="binding site" evidence="4">
    <location>
        <position position="72"/>
    </location>
    <ligand>
        <name>Ca(2+)</name>
        <dbReference type="ChEBI" id="CHEBI:29108"/>
    </ligand>
</feature>
<feature type="binding site" evidence="4">
    <location>
        <position position="77"/>
    </location>
    <ligand>
        <name>Ca(2+)</name>
        <dbReference type="ChEBI" id="CHEBI:29108"/>
    </ligand>
</feature>
<feature type="modified residue" description="N-acetylalanine" evidence="4">
    <location>
        <position position="2"/>
    </location>
</feature>
<feature type="modified residue" description="N6-acetyllysine" evidence="3">
    <location>
        <position position="353"/>
    </location>
</feature>
<feature type="modified residue" description="N6-acetyllysine" evidence="3">
    <location>
        <position position="372"/>
    </location>
</feature>
<feature type="modified residue" description="N6-methyllysine" evidence="4">
    <location>
        <position position="453"/>
    </location>
</feature>
<feature type="modified residue" description="N6-acetyllysine; alternate" evidence="3">
    <location>
        <position position="484"/>
    </location>
</feature>
<feature type="modified residue" description="N6-succinyllysine; alternate" evidence="3">
    <location>
        <position position="484"/>
    </location>
</feature>
<feature type="modified residue" description="N6-succinyllysine" evidence="3">
    <location>
        <position position="580"/>
    </location>
</feature>
<feature type="modified residue" description="N6-acetyllysine" evidence="3">
    <location>
        <position position="661"/>
    </location>
</feature>
<organism evidence="8">
    <name type="scientific">Macaca fascicularis</name>
    <name type="common">Crab-eating macaque</name>
    <name type="synonym">Cynomolgus monkey</name>
    <dbReference type="NCBI Taxonomy" id="9541"/>
    <lineage>
        <taxon>Eukaryota</taxon>
        <taxon>Metazoa</taxon>
        <taxon>Chordata</taxon>
        <taxon>Craniata</taxon>
        <taxon>Vertebrata</taxon>
        <taxon>Euteleostomi</taxon>
        <taxon>Mammalia</taxon>
        <taxon>Eutheria</taxon>
        <taxon>Euarchontoglires</taxon>
        <taxon>Primates</taxon>
        <taxon>Haplorrhini</taxon>
        <taxon>Catarrhini</taxon>
        <taxon>Cercopithecidae</taxon>
        <taxon>Cercopithecinae</taxon>
        <taxon>Macaca</taxon>
    </lineage>
</organism>
<comment type="function">
    <text evidence="4">Mitochondrial electrogenic aspartate/glutamate antiporter that favors efflux of aspartate and entry of glutamate and proton within the mitochondria as part of the malate-aspartate shuttle. Also mediates the uptake of L-cysteinesulfinate (3-sulfino-L-alanine) by mitochondria in exchange of L-glutamate and proton. Can also exchange L-cysteinesulfinate with aspartate in their anionic form without any proton translocation. Lacks transport activity towards gamma-aminobutyric acid (GABA).</text>
</comment>
<comment type="catalytic activity">
    <reaction evidence="4">
        <text>L-aspartate(in) + L-glutamate(out) + H(+)(out) = L-aspartate(out) + L-glutamate(in) + H(+)(in)</text>
        <dbReference type="Rhea" id="RHEA:70783"/>
        <dbReference type="ChEBI" id="CHEBI:15378"/>
        <dbReference type="ChEBI" id="CHEBI:29985"/>
        <dbReference type="ChEBI" id="CHEBI:29991"/>
    </reaction>
</comment>
<comment type="catalytic activity">
    <reaction evidence="4">
        <text>3-sulfino-L-alanine(out) + L-glutamate(in) + H(+)(in) = 3-sulfino-L-alanine(in) + L-glutamate(out) + H(+)(out)</text>
        <dbReference type="Rhea" id="RHEA:70967"/>
        <dbReference type="ChEBI" id="CHEBI:15378"/>
        <dbReference type="ChEBI" id="CHEBI:29985"/>
        <dbReference type="ChEBI" id="CHEBI:61085"/>
    </reaction>
</comment>
<comment type="catalytic activity">
    <reaction evidence="1">
        <text>3-sulfino-L-alanine(out) + L-aspartate(in) = 3-sulfino-L-alanine(in) + L-aspartate(out)</text>
        <dbReference type="Rhea" id="RHEA:70975"/>
        <dbReference type="ChEBI" id="CHEBI:29991"/>
        <dbReference type="ChEBI" id="CHEBI:61085"/>
    </reaction>
</comment>
<comment type="subunit">
    <text evidence="4">Homodimer (via N-terminus).</text>
</comment>
<comment type="subcellular location">
    <subcellularLocation>
        <location evidence="4">Mitochondrion inner membrane</location>
        <topology evidence="4">Multi-pass membrane protein</topology>
    </subcellularLocation>
</comment>
<comment type="domain">
    <text evidence="2 4">The EF-hand 2 domain within the regulatory N-terminal domain binds one calcium in the mitochondrial intermembrane space. Calcium triggers the binding of the regulatory N-terminal domain to the C-terminal domain, opening a vestibule which allows the substrates to be translocated through the carrier domain (By similarity). In the absence of calcium, the linker loop domain may close the vestibule and prevent substrates from entering the carrier domain (By similarity).</text>
</comment>
<comment type="similarity">
    <text evidence="7">Belongs to the mitochondrial carrier (TC 2.A.29) family.</text>
</comment>
<protein>
    <recommendedName>
        <fullName evidence="4">Electrogenic aspartate/glutamate antiporter SLC25A13, mitochondrial</fullName>
    </recommendedName>
    <alternativeName>
        <fullName evidence="4">Solute carrier family 25 member 13</fullName>
    </alternativeName>
</protein>
<keyword id="KW-0007">Acetylation</keyword>
<keyword id="KW-0106">Calcium</keyword>
<keyword id="KW-0472">Membrane</keyword>
<keyword id="KW-0479">Metal-binding</keyword>
<keyword id="KW-0488">Methylation</keyword>
<keyword id="KW-0496">Mitochondrion</keyword>
<keyword id="KW-0999">Mitochondrion inner membrane</keyword>
<keyword id="KW-1185">Reference proteome</keyword>
<keyword id="KW-0677">Repeat</keyword>
<keyword id="KW-0812">Transmembrane</keyword>
<keyword id="KW-1133">Transmembrane helix</keyword>
<keyword id="KW-0813">Transport</keyword>
<accession>Q8HXW2</accession>
<dbReference type="EMBL" id="AB083329">
    <property type="protein sequence ID" value="BAC20608.1"/>
    <property type="molecule type" value="mRNA"/>
</dbReference>
<dbReference type="RefSeq" id="NP_001270156.1">
    <property type="nucleotide sequence ID" value="NM_001283227.1"/>
</dbReference>
<dbReference type="SMR" id="Q8HXW2"/>
<dbReference type="STRING" id="9541.ENSMFAP00000037560"/>
<dbReference type="eggNOG" id="KOG0751">
    <property type="taxonomic scope" value="Eukaryota"/>
</dbReference>
<dbReference type="Proteomes" id="UP000233100">
    <property type="component" value="Unplaced"/>
</dbReference>
<dbReference type="GO" id="GO:0005743">
    <property type="term" value="C:mitochondrial inner membrane"/>
    <property type="evidence" value="ECO:0000250"/>
    <property type="project" value="UniProtKB"/>
</dbReference>
<dbReference type="GO" id="GO:0005739">
    <property type="term" value="C:mitochondrion"/>
    <property type="evidence" value="ECO:0000250"/>
    <property type="project" value="UniProtKB"/>
</dbReference>
<dbReference type="GO" id="GO:0000514">
    <property type="term" value="F:3-sulfino-L-alanine: proton, glutamate antiporter activity"/>
    <property type="evidence" value="ECO:0000250"/>
    <property type="project" value="UniProtKB"/>
</dbReference>
<dbReference type="GO" id="GO:0000515">
    <property type="term" value="F:aspartate:glutamate, proton antiporter activity"/>
    <property type="evidence" value="ECO:0000250"/>
    <property type="project" value="UniProtKB"/>
</dbReference>
<dbReference type="GO" id="GO:0005509">
    <property type="term" value="F:calcium ion binding"/>
    <property type="evidence" value="ECO:0000250"/>
    <property type="project" value="UniProtKB"/>
</dbReference>
<dbReference type="GO" id="GO:0042802">
    <property type="term" value="F:identical protein binding"/>
    <property type="evidence" value="ECO:0000250"/>
    <property type="project" value="UniProtKB"/>
</dbReference>
<dbReference type="GO" id="GO:0015183">
    <property type="term" value="F:L-aspartate transmembrane transporter activity"/>
    <property type="evidence" value="ECO:0007669"/>
    <property type="project" value="TreeGrafter"/>
</dbReference>
<dbReference type="GO" id="GO:0005313">
    <property type="term" value="F:L-glutamate transmembrane transporter activity"/>
    <property type="evidence" value="ECO:0007669"/>
    <property type="project" value="TreeGrafter"/>
</dbReference>
<dbReference type="GO" id="GO:0015810">
    <property type="term" value="P:aspartate transmembrane transport"/>
    <property type="evidence" value="ECO:0000250"/>
    <property type="project" value="UniProtKB"/>
</dbReference>
<dbReference type="GO" id="GO:0006754">
    <property type="term" value="P:ATP biosynthetic process"/>
    <property type="evidence" value="ECO:0000250"/>
    <property type="project" value="UniProtKB"/>
</dbReference>
<dbReference type="GO" id="GO:0045333">
    <property type="term" value="P:cellular respiration"/>
    <property type="evidence" value="ECO:0000250"/>
    <property type="project" value="UniProtKB"/>
</dbReference>
<dbReference type="GO" id="GO:0015813">
    <property type="term" value="P:L-glutamate transmembrane transport"/>
    <property type="evidence" value="ECO:0000250"/>
    <property type="project" value="UniProtKB"/>
</dbReference>
<dbReference type="GO" id="GO:0043490">
    <property type="term" value="P:malate-aspartate shuttle"/>
    <property type="evidence" value="ECO:0000250"/>
    <property type="project" value="UniProtKB"/>
</dbReference>
<dbReference type="GO" id="GO:0051592">
    <property type="term" value="P:response to calcium ion"/>
    <property type="evidence" value="ECO:0000250"/>
    <property type="project" value="UniProtKB"/>
</dbReference>
<dbReference type="FunFam" id="1.50.40.10:FF:000004">
    <property type="entry name" value="Calcium-binding mitochondrial carrier protein Aralar1"/>
    <property type="match status" value="1"/>
</dbReference>
<dbReference type="FunFam" id="1.10.238.10:FF:000064">
    <property type="entry name" value="calcium-binding mitochondrial carrier protein Aralar1 isoform X1"/>
    <property type="match status" value="1"/>
</dbReference>
<dbReference type="FunFam" id="1.10.238.10:FF:000529">
    <property type="entry name" value="Solute carrier family 25 member 13"/>
    <property type="match status" value="1"/>
</dbReference>
<dbReference type="Gene3D" id="1.10.238.10">
    <property type="entry name" value="EF-hand"/>
    <property type="match status" value="2"/>
</dbReference>
<dbReference type="Gene3D" id="1.50.40.10">
    <property type="entry name" value="Mitochondrial carrier domain"/>
    <property type="match status" value="1"/>
</dbReference>
<dbReference type="InterPro" id="IPR011992">
    <property type="entry name" value="EF-hand-dom_pair"/>
</dbReference>
<dbReference type="InterPro" id="IPR002048">
    <property type="entry name" value="EF_hand_dom"/>
</dbReference>
<dbReference type="InterPro" id="IPR002067">
    <property type="entry name" value="Mit_carrier"/>
</dbReference>
<dbReference type="InterPro" id="IPR051028">
    <property type="entry name" value="Mito_Solute_Carrier"/>
</dbReference>
<dbReference type="InterPro" id="IPR018108">
    <property type="entry name" value="Mitochondrial_sb/sol_carrier"/>
</dbReference>
<dbReference type="InterPro" id="IPR023395">
    <property type="entry name" value="Mt_carrier_dom_sf"/>
</dbReference>
<dbReference type="PANTHER" id="PTHR45678:SF12">
    <property type="entry name" value="ELECTROGENIC ASPARTATE_GLUTAMATE ANTIPORTER SLC25A13, MITOCHONDRIAL"/>
    <property type="match status" value="1"/>
</dbReference>
<dbReference type="PANTHER" id="PTHR45678">
    <property type="entry name" value="MITOCHONDRIAL 2-OXODICARBOXYLATE CARRIER 1-RELATED"/>
    <property type="match status" value="1"/>
</dbReference>
<dbReference type="Pfam" id="PF00153">
    <property type="entry name" value="Mito_carr"/>
    <property type="match status" value="3"/>
</dbReference>
<dbReference type="PRINTS" id="PR00926">
    <property type="entry name" value="MITOCARRIER"/>
</dbReference>
<dbReference type="SUPFAM" id="SSF47473">
    <property type="entry name" value="EF-hand"/>
    <property type="match status" value="2"/>
</dbReference>
<dbReference type="SUPFAM" id="SSF103506">
    <property type="entry name" value="Mitochondrial carrier"/>
    <property type="match status" value="1"/>
</dbReference>
<dbReference type="PROSITE" id="PS50222">
    <property type="entry name" value="EF_HAND_2"/>
    <property type="match status" value="2"/>
</dbReference>
<dbReference type="PROSITE" id="PS50920">
    <property type="entry name" value="SOLCAR"/>
    <property type="match status" value="3"/>
</dbReference>
<sequence length="674" mass="74003">MAAAKVALTKRADPAELRTIFLKYASIEKNGEFFTSPNDFVTRYLNIFGESQPNPKTVELLSGVADQTKDGLISFQEFVAFESVLCAPDALFMVAFQLFDKAGKGEVTFEDVKQVFGQTTIHQHIPFNWDSEFVQLHFGKERKRHLTYAEFTQFLLEIQLEHAKQAFVQRDNASTGRVTAIDFRDIMVTIRPHVLTPFVEECLVAAAGGTTSHQVSFSYFNGFNSLLNNMELTRKIYSTLAGNRKDVEVTKEEFVLAAQKFGQVTPMEVDILFRLADLYEPRGRMTLADIERIAPLEEGTLPFNLAEAQRQKASGDSARPVLLQVAESAYRFGLGSVAGAVGATAVYPIDLVKTRMQNQRSTGSFVGELMYKNSFDCFKKVLRYEGFFGLYRGLLPQLLGVAPEKAIKLTVNDFVRDKFMHKDGSVPLAAEILAGGCAGGSQVIFTNPLEIVKIRLQVAGEITTGPRVSALSVVRDLGFFGIYKGAKACFLRDIPFSAIYFPCYAHARASFANEDGQVSPGSLLLAGAIAGMPAASLVTPADVIKTRLQVAARAGQTTYSGVIDCFKKILREEGPKALWKGAARVFRSSPQFGVTLLTYELLQRWFYIDFGGVKPMGSEPVPKSRINLPAPNPDHVGGYKLAVATFAGIENKFGLYLPLFKPSVPTSEAIGGGP</sequence>